<proteinExistence type="evidence at protein level"/>
<reference key="1">
    <citation type="journal article" date="2005" name="Science">
        <title>The transcriptional landscape of the mammalian genome.</title>
        <authorList>
            <person name="Carninci P."/>
            <person name="Kasukawa T."/>
            <person name="Katayama S."/>
            <person name="Gough J."/>
            <person name="Frith M.C."/>
            <person name="Maeda N."/>
            <person name="Oyama R."/>
            <person name="Ravasi T."/>
            <person name="Lenhard B."/>
            <person name="Wells C."/>
            <person name="Kodzius R."/>
            <person name="Shimokawa K."/>
            <person name="Bajic V.B."/>
            <person name="Brenner S.E."/>
            <person name="Batalov S."/>
            <person name="Forrest A.R."/>
            <person name="Zavolan M."/>
            <person name="Davis M.J."/>
            <person name="Wilming L.G."/>
            <person name="Aidinis V."/>
            <person name="Allen J.E."/>
            <person name="Ambesi-Impiombato A."/>
            <person name="Apweiler R."/>
            <person name="Aturaliya R.N."/>
            <person name="Bailey T.L."/>
            <person name="Bansal M."/>
            <person name="Baxter L."/>
            <person name="Beisel K.W."/>
            <person name="Bersano T."/>
            <person name="Bono H."/>
            <person name="Chalk A.M."/>
            <person name="Chiu K.P."/>
            <person name="Choudhary V."/>
            <person name="Christoffels A."/>
            <person name="Clutterbuck D.R."/>
            <person name="Crowe M.L."/>
            <person name="Dalla E."/>
            <person name="Dalrymple B.P."/>
            <person name="de Bono B."/>
            <person name="Della Gatta G."/>
            <person name="di Bernardo D."/>
            <person name="Down T."/>
            <person name="Engstrom P."/>
            <person name="Fagiolini M."/>
            <person name="Faulkner G."/>
            <person name="Fletcher C.F."/>
            <person name="Fukushima T."/>
            <person name="Furuno M."/>
            <person name="Futaki S."/>
            <person name="Gariboldi M."/>
            <person name="Georgii-Hemming P."/>
            <person name="Gingeras T.R."/>
            <person name="Gojobori T."/>
            <person name="Green R.E."/>
            <person name="Gustincich S."/>
            <person name="Harbers M."/>
            <person name="Hayashi Y."/>
            <person name="Hensch T.K."/>
            <person name="Hirokawa N."/>
            <person name="Hill D."/>
            <person name="Huminiecki L."/>
            <person name="Iacono M."/>
            <person name="Ikeo K."/>
            <person name="Iwama A."/>
            <person name="Ishikawa T."/>
            <person name="Jakt M."/>
            <person name="Kanapin A."/>
            <person name="Katoh M."/>
            <person name="Kawasawa Y."/>
            <person name="Kelso J."/>
            <person name="Kitamura H."/>
            <person name="Kitano H."/>
            <person name="Kollias G."/>
            <person name="Krishnan S.P."/>
            <person name="Kruger A."/>
            <person name="Kummerfeld S.K."/>
            <person name="Kurochkin I.V."/>
            <person name="Lareau L.F."/>
            <person name="Lazarevic D."/>
            <person name="Lipovich L."/>
            <person name="Liu J."/>
            <person name="Liuni S."/>
            <person name="McWilliam S."/>
            <person name="Madan Babu M."/>
            <person name="Madera M."/>
            <person name="Marchionni L."/>
            <person name="Matsuda H."/>
            <person name="Matsuzawa S."/>
            <person name="Miki H."/>
            <person name="Mignone F."/>
            <person name="Miyake S."/>
            <person name="Morris K."/>
            <person name="Mottagui-Tabar S."/>
            <person name="Mulder N."/>
            <person name="Nakano N."/>
            <person name="Nakauchi H."/>
            <person name="Ng P."/>
            <person name="Nilsson R."/>
            <person name="Nishiguchi S."/>
            <person name="Nishikawa S."/>
            <person name="Nori F."/>
            <person name="Ohara O."/>
            <person name="Okazaki Y."/>
            <person name="Orlando V."/>
            <person name="Pang K.C."/>
            <person name="Pavan W.J."/>
            <person name="Pavesi G."/>
            <person name="Pesole G."/>
            <person name="Petrovsky N."/>
            <person name="Piazza S."/>
            <person name="Reed J."/>
            <person name="Reid J.F."/>
            <person name="Ring B.Z."/>
            <person name="Ringwald M."/>
            <person name="Rost B."/>
            <person name="Ruan Y."/>
            <person name="Salzberg S.L."/>
            <person name="Sandelin A."/>
            <person name="Schneider C."/>
            <person name="Schoenbach C."/>
            <person name="Sekiguchi K."/>
            <person name="Semple C.A."/>
            <person name="Seno S."/>
            <person name="Sessa L."/>
            <person name="Sheng Y."/>
            <person name="Shibata Y."/>
            <person name="Shimada H."/>
            <person name="Shimada K."/>
            <person name="Silva D."/>
            <person name="Sinclair B."/>
            <person name="Sperling S."/>
            <person name="Stupka E."/>
            <person name="Sugiura K."/>
            <person name="Sultana R."/>
            <person name="Takenaka Y."/>
            <person name="Taki K."/>
            <person name="Tammoja K."/>
            <person name="Tan S.L."/>
            <person name="Tang S."/>
            <person name="Taylor M.S."/>
            <person name="Tegner J."/>
            <person name="Teichmann S.A."/>
            <person name="Ueda H.R."/>
            <person name="van Nimwegen E."/>
            <person name="Verardo R."/>
            <person name="Wei C.L."/>
            <person name="Yagi K."/>
            <person name="Yamanishi H."/>
            <person name="Zabarovsky E."/>
            <person name="Zhu S."/>
            <person name="Zimmer A."/>
            <person name="Hide W."/>
            <person name="Bult C."/>
            <person name="Grimmond S.M."/>
            <person name="Teasdale R.D."/>
            <person name="Liu E.T."/>
            <person name="Brusic V."/>
            <person name="Quackenbush J."/>
            <person name="Wahlestedt C."/>
            <person name="Mattick J.S."/>
            <person name="Hume D.A."/>
            <person name="Kai C."/>
            <person name="Sasaki D."/>
            <person name="Tomaru Y."/>
            <person name="Fukuda S."/>
            <person name="Kanamori-Katayama M."/>
            <person name="Suzuki M."/>
            <person name="Aoki J."/>
            <person name="Arakawa T."/>
            <person name="Iida J."/>
            <person name="Imamura K."/>
            <person name="Itoh M."/>
            <person name="Kato T."/>
            <person name="Kawaji H."/>
            <person name="Kawagashira N."/>
            <person name="Kawashima T."/>
            <person name="Kojima M."/>
            <person name="Kondo S."/>
            <person name="Konno H."/>
            <person name="Nakano K."/>
            <person name="Ninomiya N."/>
            <person name="Nishio T."/>
            <person name="Okada M."/>
            <person name="Plessy C."/>
            <person name="Shibata K."/>
            <person name="Shiraki T."/>
            <person name="Suzuki S."/>
            <person name="Tagami M."/>
            <person name="Waki K."/>
            <person name="Watahiki A."/>
            <person name="Okamura-Oho Y."/>
            <person name="Suzuki H."/>
            <person name="Kawai J."/>
            <person name="Hayashizaki Y."/>
        </authorList>
    </citation>
    <scope>NUCLEOTIDE SEQUENCE [LARGE SCALE MRNA]</scope>
    <source>
        <strain>C57BL/6J</strain>
        <tissue>Egg</tissue>
        <tissue>Pancreas</tissue>
        <tissue>Stomach</tissue>
        <tissue>Testis</tissue>
    </source>
</reference>
<reference key="2">
    <citation type="journal article" date="2004" name="Genome Res.">
        <title>The status, quality, and expansion of the NIH full-length cDNA project: the Mammalian Gene Collection (MGC).</title>
        <authorList>
            <consortium name="The MGC Project Team"/>
        </authorList>
    </citation>
    <scope>NUCLEOTIDE SEQUENCE [LARGE SCALE MRNA]</scope>
    <source>
        <strain>FVB/N</strain>
        <tissue>Colon</tissue>
    </source>
</reference>
<reference key="3">
    <citation type="journal article" date="2007" name="Mol. Cell. Proteomics">
        <title>Qualitative and quantitative analyses of protein phosphorylation in naive and stimulated mouse synaptosomal preparations.</title>
        <authorList>
            <person name="Munton R.P."/>
            <person name="Tweedie-Cullen R."/>
            <person name="Livingstone-Zatchej M."/>
            <person name="Weinandy F."/>
            <person name="Waidelich M."/>
            <person name="Longo D."/>
            <person name="Gehrig P."/>
            <person name="Potthast F."/>
            <person name="Rutishauser D."/>
            <person name="Gerrits B."/>
            <person name="Panse C."/>
            <person name="Schlapbach R."/>
            <person name="Mansuy I.M."/>
        </authorList>
    </citation>
    <scope>IDENTIFICATION BY MASS SPECTROMETRY [LARGE SCALE ANALYSIS]</scope>
    <source>
        <tissue>Brain cortex</tissue>
    </source>
</reference>
<reference key="4">
    <citation type="journal article" date="2007" name="Proc. Natl. Acad. Sci. U.S.A.">
        <title>Large-scale phosphorylation analysis of mouse liver.</title>
        <authorList>
            <person name="Villen J."/>
            <person name="Beausoleil S.A."/>
            <person name="Gerber S.A."/>
            <person name="Gygi S.P."/>
        </authorList>
    </citation>
    <scope>PHOSPHORYLATION [LARGE SCALE ANALYSIS] AT SER-106</scope>
    <scope>IDENTIFICATION BY MASS SPECTROMETRY [LARGE SCALE ANALYSIS]</scope>
    <source>
        <tissue>Liver</tissue>
    </source>
</reference>
<reference key="5">
    <citation type="journal article" date="2008" name="J. Proteome Res.">
        <title>Specific phosphopeptide enrichment with immobilized titanium ion affinity chromatography adsorbent for phosphoproteome analysis.</title>
        <authorList>
            <person name="Zhou H."/>
            <person name="Ye M."/>
            <person name="Dong J."/>
            <person name="Han G."/>
            <person name="Jiang X."/>
            <person name="Wu R."/>
            <person name="Zou H."/>
        </authorList>
    </citation>
    <scope>PHOSPHORYLATION [LARGE SCALE ANALYSIS] AT SER-106</scope>
    <scope>IDENTIFICATION BY MASS SPECTROMETRY [LARGE SCALE ANALYSIS]</scope>
    <source>
        <tissue>Liver</tissue>
    </source>
</reference>
<reference key="6">
    <citation type="journal article" date="2010" name="Cell">
        <title>A tissue-specific atlas of mouse protein phosphorylation and expression.</title>
        <authorList>
            <person name="Huttlin E.L."/>
            <person name="Jedrychowski M.P."/>
            <person name="Elias J.E."/>
            <person name="Goswami T."/>
            <person name="Rad R."/>
            <person name="Beausoleil S.A."/>
            <person name="Villen J."/>
            <person name="Haas W."/>
            <person name="Sowa M.E."/>
            <person name="Gygi S.P."/>
        </authorList>
    </citation>
    <scope>PHOSPHORYLATION [LARGE SCALE ANALYSIS] AT SER-106 AND SER-116</scope>
    <scope>IDENTIFICATION BY MASS SPECTROMETRY [LARGE SCALE ANALYSIS]</scope>
    <source>
        <tissue>Brain</tissue>
        <tissue>Brown adipose tissue</tissue>
        <tissue>Heart</tissue>
        <tissue>Kidney</tissue>
        <tissue>Liver</tissue>
        <tissue>Lung</tissue>
        <tissue>Pancreas</tissue>
        <tissue>Spleen</tissue>
        <tissue>Testis</tissue>
    </source>
</reference>
<keyword id="KW-0496">Mitochondrion</keyword>
<keyword id="KW-0597">Phosphoprotein</keyword>
<keyword id="KW-1185">Reference proteome</keyword>
<keyword id="KW-0804">Transcription</keyword>
<keyword id="KW-0805">Transcription regulation</keyword>
<keyword id="KW-0809">Transit peptide</keyword>
<organism>
    <name type="scientific">Mus musculus</name>
    <name type="common">Mouse</name>
    <dbReference type="NCBI Taxonomy" id="10090"/>
    <lineage>
        <taxon>Eukaryota</taxon>
        <taxon>Metazoa</taxon>
        <taxon>Chordata</taxon>
        <taxon>Craniata</taxon>
        <taxon>Vertebrata</taxon>
        <taxon>Euteleostomi</taxon>
        <taxon>Mammalia</taxon>
        <taxon>Eutheria</taxon>
        <taxon>Euarchontoglires</taxon>
        <taxon>Glires</taxon>
        <taxon>Rodentia</taxon>
        <taxon>Myomorpha</taxon>
        <taxon>Muroidea</taxon>
        <taxon>Muridae</taxon>
        <taxon>Murinae</taxon>
        <taxon>Mus</taxon>
        <taxon>Mus</taxon>
    </lineage>
</organism>
<name>MRES1_MOUSE</name>
<protein>
    <recommendedName>
        <fullName>Mitochondrial transcription rescue factor 1</fullName>
    </recommendedName>
</protein>
<dbReference type="EMBL" id="AK006199">
    <property type="protein sequence ID" value="BAB24454.1"/>
    <property type="molecule type" value="mRNA"/>
</dbReference>
<dbReference type="EMBL" id="AK007370">
    <property type="protein sequence ID" value="BAB24992.1"/>
    <property type="molecule type" value="mRNA"/>
</dbReference>
<dbReference type="EMBL" id="AK008795">
    <property type="protein sequence ID" value="BAB25900.1"/>
    <property type="molecule type" value="mRNA"/>
</dbReference>
<dbReference type="EMBL" id="AK163304">
    <property type="protein sequence ID" value="BAE37288.1"/>
    <property type="molecule type" value="mRNA"/>
</dbReference>
<dbReference type="EMBL" id="BC013506">
    <property type="protein sequence ID" value="AAH13506.1"/>
    <property type="molecule type" value="mRNA"/>
</dbReference>
<dbReference type="CCDS" id="CCDS23820.1"/>
<dbReference type="RefSeq" id="NP_080687.1">
    <property type="nucleotide sequence ID" value="NM_026411.2"/>
</dbReference>
<dbReference type="RefSeq" id="XP_006512896.1">
    <property type="nucleotide sequence ID" value="XM_006512833.5"/>
</dbReference>
<dbReference type="RefSeq" id="XP_006512897.1">
    <property type="nucleotide sequence ID" value="XM_006512834.4"/>
</dbReference>
<dbReference type="RefSeq" id="XP_017169558.1">
    <property type="nucleotide sequence ID" value="XM_017314069.2"/>
</dbReference>
<dbReference type="SMR" id="Q9CQF4"/>
<dbReference type="BioGRID" id="212481">
    <property type="interactions" value="3"/>
</dbReference>
<dbReference type="FunCoup" id="Q9CQF4">
    <property type="interactions" value="749"/>
</dbReference>
<dbReference type="STRING" id="10090.ENSMUSP00000119053"/>
<dbReference type="GlyGen" id="Q9CQF4">
    <property type="glycosylation" value="1 site, 1 N-linked glycan (1 site)"/>
</dbReference>
<dbReference type="iPTMnet" id="Q9CQF4"/>
<dbReference type="PhosphoSitePlus" id="Q9CQF4"/>
<dbReference type="jPOST" id="Q9CQF4"/>
<dbReference type="PaxDb" id="10090-ENSMUSP00000019932"/>
<dbReference type="PeptideAtlas" id="Q9CQF4"/>
<dbReference type="Pumba" id="Q9CQF4"/>
<dbReference type="Antibodypedia" id="55873">
    <property type="antibodies" value="76 antibodies from 14 providers"/>
</dbReference>
<dbReference type="DNASU" id="67851"/>
<dbReference type="Ensembl" id="ENSMUST00000147196.3">
    <property type="protein sequence ID" value="ENSMUSP00000119053.3"/>
    <property type="gene ID" value="ENSMUSG00000019797.12"/>
</dbReference>
<dbReference type="GeneID" id="67851"/>
<dbReference type="KEGG" id="mmu:67851"/>
<dbReference type="UCSC" id="uc007ezk.1">
    <property type="organism name" value="mouse"/>
</dbReference>
<dbReference type="AGR" id="MGI:1915101"/>
<dbReference type="CTD" id="51250"/>
<dbReference type="MGI" id="MGI:1915101">
    <property type="gene designation" value="Mtres1"/>
</dbReference>
<dbReference type="VEuPathDB" id="HostDB:ENSMUSG00000019797"/>
<dbReference type="eggNOG" id="KOG4837">
    <property type="taxonomic scope" value="Eukaryota"/>
</dbReference>
<dbReference type="GeneTree" id="ENSGT00390000009366"/>
<dbReference type="HOGENOM" id="CLU_076117_0_0_1"/>
<dbReference type="InParanoid" id="Q9CQF4"/>
<dbReference type="OMA" id="SLFCSCQ"/>
<dbReference type="OrthoDB" id="4150at2759"/>
<dbReference type="PhylomeDB" id="Q9CQF4"/>
<dbReference type="TreeFam" id="TF323798"/>
<dbReference type="BioGRID-ORCS" id="67851">
    <property type="hits" value="2 hits in 77 CRISPR screens"/>
</dbReference>
<dbReference type="PRO" id="PR:Q9CQF4"/>
<dbReference type="Proteomes" id="UP000000589">
    <property type="component" value="Chromosome 10"/>
</dbReference>
<dbReference type="RNAct" id="Q9CQF4">
    <property type="molecule type" value="protein"/>
</dbReference>
<dbReference type="Bgee" id="ENSMUSG00000019797">
    <property type="expression patterns" value="Expressed in motor neuron and 264 other cell types or tissues"/>
</dbReference>
<dbReference type="GO" id="GO:0005759">
    <property type="term" value="C:mitochondrial matrix"/>
    <property type="evidence" value="ECO:0000250"/>
    <property type="project" value="UniProtKB"/>
</dbReference>
<dbReference type="GO" id="GO:0005739">
    <property type="term" value="C:mitochondrion"/>
    <property type="evidence" value="ECO:0007005"/>
    <property type="project" value="MGI"/>
</dbReference>
<dbReference type="GO" id="GO:0043023">
    <property type="term" value="F:ribosomal large subunit binding"/>
    <property type="evidence" value="ECO:0000250"/>
    <property type="project" value="UniProtKB"/>
</dbReference>
<dbReference type="GO" id="GO:0003723">
    <property type="term" value="F:RNA binding"/>
    <property type="evidence" value="ECO:0000250"/>
    <property type="project" value="UniProtKB"/>
</dbReference>
<dbReference type="GO" id="GO:0000049">
    <property type="term" value="F:tRNA binding"/>
    <property type="evidence" value="ECO:0000250"/>
    <property type="project" value="UniProtKB"/>
</dbReference>
<dbReference type="GO" id="GO:1903108">
    <property type="term" value="P:regulation of mitochondrial transcription"/>
    <property type="evidence" value="ECO:0000250"/>
    <property type="project" value="UniProtKB"/>
</dbReference>
<dbReference type="GO" id="GO:0072344">
    <property type="term" value="P:rescue of stalled ribosome"/>
    <property type="evidence" value="ECO:0000250"/>
    <property type="project" value="UniProtKB"/>
</dbReference>
<dbReference type="PANTHER" id="PTHR13633">
    <property type="entry name" value="MITOCHONDRIAL TRANSCRIPTION RESCUE FACTOR 1"/>
    <property type="match status" value="1"/>
</dbReference>
<dbReference type="PANTHER" id="PTHR13633:SF3">
    <property type="entry name" value="MITOCHONDRIAL TRANSCRIPTION RESCUE FACTOR 1"/>
    <property type="match status" value="1"/>
</dbReference>
<gene>
    <name type="primary">Mtres1</name>
</gene>
<evidence type="ECO:0000250" key="1">
    <source>
        <dbReference type="UniProtKB" id="Q9P0P8"/>
    </source>
</evidence>
<evidence type="ECO:0000255" key="2">
    <source>
        <dbReference type="PROSITE-ProRule" id="PRU00182"/>
    </source>
</evidence>
<evidence type="ECO:0000256" key="3">
    <source>
        <dbReference type="SAM" id="MobiDB-lite"/>
    </source>
</evidence>
<evidence type="ECO:0007744" key="4">
    <source>
    </source>
</evidence>
<evidence type="ECO:0007744" key="5">
    <source>
    </source>
</evidence>
<evidence type="ECO:0007744" key="6">
    <source>
    </source>
</evidence>
<comment type="function">
    <text evidence="1">Mitochondrial RNA-binding protein involved in mitochondrial transcription regulation. Functions as a protective factor to maintain proper mitochondrial RNA level during stress. Acts at the transcription level and its protective function depends on its RNA binding ability. Part of a mitoribosome-associated quality control pathway that prevents aberrant translation by responding to interruptions during elongation. As heterodimer with MTRF, ejects the unfinished nascent chain and peptidyl transfer RNA (tRNA), respectively, from stalled ribosomes. Recruitment of mitoribosome biogenesis factors to these quality control intermediates suggests additional roles for MTRES1 and MTRF during mitoribosome rescue.</text>
</comment>
<comment type="subunit">
    <text evidence="1">Monomer. Interacts with POLRMT. Interacts (via S4 domain) with MTRFR (via C-terminus). Associates with mitoribosomal S39 large subunit, peptidyl tRNA and nascent chain.</text>
</comment>
<comment type="subcellular location">
    <subcellularLocation>
        <location evidence="1">Mitochondrion matrix</location>
    </subcellularLocation>
</comment>
<feature type="transit peptide" description="Mitochondrion" evidence="1">
    <location>
        <begin position="1"/>
        <end position="83"/>
    </location>
</feature>
<feature type="chain" id="PRO_0000089560" description="Mitochondrial transcription rescue factor 1">
    <location>
        <begin position="84"/>
        <end position="240"/>
    </location>
</feature>
<feature type="domain" description="S4 RNA-binding" evidence="1 2">
    <location>
        <begin position="142"/>
        <end position="217"/>
    </location>
</feature>
<feature type="region of interest" description="Disordered" evidence="3">
    <location>
        <begin position="92"/>
        <end position="127"/>
    </location>
</feature>
<feature type="compositionally biased region" description="Acidic residues" evidence="3">
    <location>
        <begin position="101"/>
        <end position="124"/>
    </location>
</feature>
<feature type="modified residue" description="Phosphoserine" evidence="4 5 6">
    <location>
        <position position="106"/>
    </location>
</feature>
<feature type="modified residue" description="Phosphoserine" evidence="6">
    <location>
        <position position="116"/>
    </location>
</feature>
<sequence>MAVPGVRLLTGALRKPDAWTRLWGVIQGTSSHKLCASWNRYLYFSSTKLNTSNYKTLFRNIFSLRLPELLVSPECYFPFSIRLKSNINSKKSTKKTLQKEADEEDSDEETSYPERSEQEEELESEPGVAKDYKDLEKVVQSFRYDVILKTGLDVGRNKVEDAFYKGELRLNGEKLWKKSRTVKVGDTLDLITGENKETGTEVVMRILLKKVYEEKTENDKHRVVLRRWKSLKLPKKTLSK</sequence>
<accession>Q9CQF4</accession>
<accession>Q3TQU4</accession>